<evidence type="ECO:0000250" key="1"/>
<evidence type="ECO:0000255" key="2"/>
<evidence type="ECO:0000305" key="3"/>
<gene>
    <name type="primary">psf-1</name>
</gene>
<organism>
    <name type="scientific">Bacillus pumilus</name>
    <name type="common">Bacillus mesentericus</name>
    <dbReference type="NCBI Taxonomy" id="1408"/>
    <lineage>
        <taxon>Bacteria</taxon>
        <taxon>Bacillati</taxon>
        <taxon>Bacillota</taxon>
        <taxon>Bacilli</taxon>
        <taxon>Bacillales</taxon>
        <taxon>Bacillaceae</taxon>
        <taxon>Bacillus</taxon>
    </lineage>
</organism>
<name>PSF1_BACPU</name>
<accession>P55810</accession>
<comment type="function">
    <text>Probably activates the peptidyl carrier protein (PCP) domains of surfactin synthetase by transferring the 4'-phosphopantetheinyl moiety of coenzyme A (CoA) to a serine residue. Required for the production of the lipopeptide antibiotic, surfactin.</text>
</comment>
<comment type="catalytic activity">
    <reaction>
        <text>apo-[peptidyl-carrier protein] + CoA = holo-[peptidyl-carrier protein] + adenosine 3',5'-bisphosphate + H(+)</text>
        <dbReference type="Rhea" id="RHEA:46228"/>
        <dbReference type="Rhea" id="RHEA-COMP:11479"/>
        <dbReference type="Rhea" id="RHEA-COMP:11480"/>
        <dbReference type="ChEBI" id="CHEBI:15378"/>
        <dbReference type="ChEBI" id="CHEBI:29999"/>
        <dbReference type="ChEBI" id="CHEBI:57287"/>
        <dbReference type="ChEBI" id="CHEBI:58343"/>
        <dbReference type="ChEBI" id="CHEBI:64479"/>
    </reaction>
</comment>
<comment type="cofactor">
    <cofactor evidence="1">
        <name>Mg(2+)</name>
        <dbReference type="ChEBI" id="CHEBI:18420"/>
    </cofactor>
</comment>
<comment type="similarity">
    <text evidence="3">Belongs to the P-Pant transferase superfamily. Gsp/Sfp/HetI/AcpT family.</text>
</comment>
<protein>
    <recommendedName>
        <fullName>4'-phosphopantetheinyl transferase psf-1</fullName>
        <ecNumber>2.7.8.-</ecNumber>
    </recommendedName>
    <alternativeName>
        <fullName>Surfactin synthesis regulator</fullName>
    </alternativeName>
</protein>
<dbReference type="EC" id="2.7.8.-"/>
<dbReference type="SMR" id="P55810"/>
<dbReference type="GO" id="GO:0005829">
    <property type="term" value="C:cytosol"/>
    <property type="evidence" value="ECO:0007669"/>
    <property type="project" value="TreeGrafter"/>
</dbReference>
<dbReference type="GO" id="GO:0008897">
    <property type="term" value="F:holo-[acyl-carrier-protein] synthase activity"/>
    <property type="evidence" value="ECO:0007669"/>
    <property type="project" value="InterPro"/>
</dbReference>
<dbReference type="GO" id="GO:0000287">
    <property type="term" value="F:magnesium ion binding"/>
    <property type="evidence" value="ECO:0007669"/>
    <property type="project" value="InterPro"/>
</dbReference>
<dbReference type="GO" id="GO:0017000">
    <property type="term" value="P:antibiotic biosynthetic process"/>
    <property type="evidence" value="ECO:0007669"/>
    <property type="project" value="UniProtKB-KW"/>
</dbReference>
<dbReference type="GO" id="GO:0006633">
    <property type="term" value="P:fatty acid biosynthetic process"/>
    <property type="evidence" value="ECO:0007669"/>
    <property type="project" value="InterPro"/>
</dbReference>
<dbReference type="GO" id="GO:0019878">
    <property type="term" value="P:lysine biosynthetic process via aminoadipic acid"/>
    <property type="evidence" value="ECO:0007669"/>
    <property type="project" value="TreeGrafter"/>
</dbReference>
<dbReference type="Gene3D" id="3.90.470.20">
    <property type="entry name" value="4'-phosphopantetheinyl transferase domain"/>
    <property type="match status" value="2"/>
</dbReference>
<dbReference type="InterPro" id="IPR008278">
    <property type="entry name" value="4-PPantetheinyl_Trfase_dom"/>
</dbReference>
<dbReference type="InterPro" id="IPR037143">
    <property type="entry name" value="4-PPantetheinyl_Trfase_dom_sf"/>
</dbReference>
<dbReference type="InterPro" id="IPR055066">
    <property type="entry name" value="AASDHPPT_N"/>
</dbReference>
<dbReference type="InterPro" id="IPR050559">
    <property type="entry name" value="P-Pant_transferase_sf"/>
</dbReference>
<dbReference type="InterPro" id="IPR004568">
    <property type="entry name" value="Ppantetheine-prot_Trfase_dom"/>
</dbReference>
<dbReference type="NCBIfam" id="TIGR00556">
    <property type="entry name" value="pantethn_trn"/>
    <property type="match status" value="1"/>
</dbReference>
<dbReference type="PANTHER" id="PTHR12215:SF10">
    <property type="entry name" value="L-AMINOADIPATE-SEMIALDEHYDE DEHYDROGENASE-PHOSPHOPANTETHEINYL TRANSFERASE"/>
    <property type="match status" value="1"/>
</dbReference>
<dbReference type="PANTHER" id="PTHR12215">
    <property type="entry name" value="PHOSPHOPANTETHEINE TRANSFERASE"/>
    <property type="match status" value="1"/>
</dbReference>
<dbReference type="Pfam" id="PF22624">
    <property type="entry name" value="AASDHPPT_N"/>
    <property type="match status" value="1"/>
</dbReference>
<dbReference type="Pfam" id="PF01648">
    <property type="entry name" value="ACPS"/>
    <property type="match status" value="1"/>
</dbReference>
<dbReference type="SUPFAM" id="SSF56214">
    <property type="entry name" value="4'-phosphopantetheinyl transferase"/>
    <property type="match status" value="2"/>
</dbReference>
<feature type="chain" id="PRO_0000206080" description="4'-phosphopantetheinyl transferase psf-1">
    <location>
        <begin position="1"/>
        <end position="233"/>
    </location>
</feature>
<feature type="region of interest" description="Peptidyl carrier protein binding" evidence="2">
    <location>
        <begin position="161"/>
        <end position="192"/>
    </location>
</feature>
<feature type="binding site" evidence="1">
    <location>
        <position position="110"/>
    </location>
    <ligand>
        <name>Mg(2+)</name>
        <dbReference type="ChEBI" id="CHEBI:18420"/>
    </ligand>
</feature>
<feature type="binding site" evidence="1">
    <location>
        <position position="112"/>
    </location>
    <ligand>
        <name>Mg(2+)</name>
        <dbReference type="ChEBI" id="CHEBI:18420"/>
    </ligand>
</feature>
<feature type="binding site" evidence="1">
    <location>
        <position position="154"/>
    </location>
    <ligand>
        <name>Mg(2+)</name>
        <dbReference type="ChEBI" id="CHEBI:18420"/>
    </ligand>
</feature>
<sequence>MKIFAIQLQPLDDKNARKQIEQLKPFVSFEKRAAAERFRFLIDARRTLLGEVLIRHIIHEMYALPMEQIIFETEGNGKPVVRQIPSFHFNLSHSGDWVVGAVDDAPVGIDIEEIKPIDLAIAERFFSADEYQDLLSQPAERQEAYFFHLWSMKEAFIKLTGKGISYGLSSFTARLSEDGQATLRLPDHEAPCVVQTYSLDPAYQMAVCTRKPAAAEHVEILTCENMLSRLNNV</sequence>
<proteinExistence type="inferred from homology"/>
<reference key="1">
    <citation type="journal article" date="1992" name="J. Ferment. Bioeng.">
        <title>Isolation of a new surfactin producer Bacillus pumilus A-1, and cloning and nucleotide sequence of the regulator gene, psf-1.</title>
        <authorList>
            <person name="Morikawa M."/>
            <person name="Ito M."/>
            <person name="Imanaka T."/>
        </authorList>
    </citation>
    <scope>NUCLEOTIDE SEQUENCE [GENOMIC DNA]</scope>
    <source>
        <strain>A-1</strain>
    </source>
</reference>
<reference key="2">
    <citation type="journal article" date="1996" name="Chem. Biol.">
        <title>A new enzyme superfamily -- the phosphopantetheinyl transferases.</title>
        <authorList>
            <person name="Lambalot R.H."/>
            <person name="Gehring A.M."/>
            <person name="Flugel R.S."/>
            <person name="Zuber P."/>
            <person name="LaCelle M."/>
            <person name="Marahiel M.A."/>
            <person name="Reid R."/>
            <person name="Khosla C."/>
            <person name="Walsh C.T."/>
        </authorList>
    </citation>
    <scope>PROBABLE FUNCTION</scope>
</reference>
<keyword id="KW-0045">Antibiotic biosynthesis</keyword>
<keyword id="KW-0460">Magnesium</keyword>
<keyword id="KW-0479">Metal-binding</keyword>
<keyword id="KW-0808">Transferase</keyword>